<evidence type="ECO:0000250" key="1"/>
<evidence type="ECO:0000256" key="2">
    <source>
        <dbReference type="SAM" id="MobiDB-lite"/>
    </source>
</evidence>
<evidence type="ECO:0000305" key="3"/>
<comment type="function">
    <text evidence="1">Element of the TORC1 signaling pathway that acts as a mediator of diverse signals and that represses RNA polymerase III transcription. Inhibits the de novo assembly of TFIIIB onto DNA (By similarity).</text>
</comment>
<comment type="subcellular location">
    <subcellularLocation>
        <location evidence="1">Nucleus</location>
    </subcellularLocation>
    <subcellularLocation>
        <location evidence="1">Cytoplasm</location>
    </subcellularLocation>
</comment>
<comment type="similarity">
    <text evidence="3">Belongs to the MAF1 family.</text>
</comment>
<protein>
    <recommendedName>
        <fullName>Repressor of RNA polymerase III transcription</fullName>
    </recommendedName>
</protein>
<reference key="1">
    <citation type="journal article" date="2005" name="Nature">
        <title>The genome of the social amoeba Dictyostelium discoideum.</title>
        <authorList>
            <person name="Eichinger L."/>
            <person name="Pachebat J.A."/>
            <person name="Gloeckner G."/>
            <person name="Rajandream M.A."/>
            <person name="Sucgang R."/>
            <person name="Berriman M."/>
            <person name="Song J."/>
            <person name="Olsen R."/>
            <person name="Szafranski K."/>
            <person name="Xu Q."/>
            <person name="Tunggal B."/>
            <person name="Kummerfeld S."/>
            <person name="Madera M."/>
            <person name="Konfortov B.A."/>
            <person name="Rivero F."/>
            <person name="Bankier A.T."/>
            <person name="Lehmann R."/>
            <person name="Hamlin N."/>
            <person name="Davies R."/>
            <person name="Gaudet P."/>
            <person name="Fey P."/>
            <person name="Pilcher K."/>
            <person name="Chen G."/>
            <person name="Saunders D."/>
            <person name="Sodergren E.J."/>
            <person name="Davis P."/>
            <person name="Kerhornou A."/>
            <person name="Nie X."/>
            <person name="Hall N."/>
            <person name="Anjard C."/>
            <person name="Hemphill L."/>
            <person name="Bason N."/>
            <person name="Farbrother P."/>
            <person name="Desany B."/>
            <person name="Just E."/>
            <person name="Morio T."/>
            <person name="Rost R."/>
            <person name="Churcher C.M."/>
            <person name="Cooper J."/>
            <person name="Haydock S."/>
            <person name="van Driessche N."/>
            <person name="Cronin A."/>
            <person name="Goodhead I."/>
            <person name="Muzny D.M."/>
            <person name="Mourier T."/>
            <person name="Pain A."/>
            <person name="Lu M."/>
            <person name="Harper D."/>
            <person name="Lindsay R."/>
            <person name="Hauser H."/>
            <person name="James K.D."/>
            <person name="Quiles M."/>
            <person name="Madan Babu M."/>
            <person name="Saito T."/>
            <person name="Buchrieser C."/>
            <person name="Wardroper A."/>
            <person name="Felder M."/>
            <person name="Thangavelu M."/>
            <person name="Johnson D."/>
            <person name="Knights A."/>
            <person name="Loulseged H."/>
            <person name="Mungall K.L."/>
            <person name="Oliver K."/>
            <person name="Price C."/>
            <person name="Quail M.A."/>
            <person name="Urushihara H."/>
            <person name="Hernandez J."/>
            <person name="Rabbinowitsch E."/>
            <person name="Steffen D."/>
            <person name="Sanders M."/>
            <person name="Ma J."/>
            <person name="Kohara Y."/>
            <person name="Sharp S."/>
            <person name="Simmonds M.N."/>
            <person name="Spiegler S."/>
            <person name="Tivey A."/>
            <person name="Sugano S."/>
            <person name="White B."/>
            <person name="Walker D."/>
            <person name="Woodward J.R."/>
            <person name="Winckler T."/>
            <person name="Tanaka Y."/>
            <person name="Shaulsky G."/>
            <person name="Schleicher M."/>
            <person name="Weinstock G.M."/>
            <person name="Rosenthal A."/>
            <person name="Cox E.C."/>
            <person name="Chisholm R.L."/>
            <person name="Gibbs R.A."/>
            <person name="Loomis W.F."/>
            <person name="Platzer M."/>
            <person name="Kay R.R."/>
            <person name="Williams J.G."/>
            <person name="Dear P.H."/>
            <person name="Noegel A.A."/>
            <person name="Barrell B.G."/>
            <person name="Kuspa A."/>
        </authorList>
    </citation>
    <scope>NUCLEOTIDE SEQUENCE [LARGE SCALE GENOMIC DNA]</scope>
    <source>
        <strain>AX4</strain>
    </source>
</reference>
<feature type="chain" id="PRO_0000337197" description="Repressor of RNA polymerase III transcription">
    <location>
        <begin position="1"/>
        <end position="278"/>
    </location>
</feature>
<feature type="region of interest" description="Disordered" evidence="2">
    <location>
        <begin position="59"/>
        <end position="114"/>
    </location>
</feature>
<feature type="compositionally biased region" description="Low complexity" evidence="2">
    <location>
        <begin position="64"/>
        <end position="101"/>
    </location>
</feature>
<feature type="compositionally biased region" description="Polar residues" evidence="2">
    <location>
        <begin position="102"/>
        <end position="114"/>
    </location>
</feature>
<keyword id="KW-0963">Cytoplasm</keyword>
<keyword id="KW-0539">Nucleus</keyword>
<keyword id="KW-1185">Reference proteome</keyword>
<keyword id="KW-0678">Repressor</keyword>
<keyword id="KW-0804">Transcription</keyword>
<keyword id="KW-0805">Transcription regulation</keyword>
<accession>Q54Y76</accession>
<organism>
    <name type="scientific">Dictyostelium discoideum</name>
    <name type="common">Social amoeba</name>
    <dbReference type="NCBI Taxonomy" id="44689"/>
    <lineage>
        <taxon>Eukaryota</taxon>
        <taxon>Amoebozoa</taxon>
        <taxon>Evosea</taxon>
        <taxon>Eumycetozoa</taxon>
        <taxon>Dictyostelia</taxon>
        <taxon>Dictyosteliales</taxon>
        <taxon>Dictyosteliaceae</taxon>
        <taxon>Dictyostelium</taxon>
    </lineage>
</organism>
<dbReference type="EMBL" id="AAFI02000023">
    <property type="protein sequence ID" value="EAL68509.1"/>
    <property type="molecule type" value="Genomic_DNA"/>
</dbReference>
<dbReference type="RefSeq" id="XP_642326.1">
    <property type="nucleotide sequence ID" value="XM_637234.2"/>
</dbReference>
<dbReference type="SMR" id="Q54Y76"/>
<dbReference type="FunCoup" id="Q54Y76">
    <property type="interactions" value="342"/>
</dbReference>
<dbReference type="STRING" id="44689.Q54Y76"/>
<dbReference type="PaxDb" id="44689-DDB0231092"/>
<dbReference type="EnsemblProtists" id="EAL68509">
    <property type="protein sequence ID" value="EAL68509"/>
    <property type="gene ID" value="DDB_G0278673"/>
</dbReference>
<dbReference type="GeneID" id="8621532"/>
<dbReference type="KEGG" id="ddi:DDB_G0278673"/>
<dbReference type="dictyBase" id="DDB_G0278673">
    <property type="gene designation" value="maf1"/>
</dbReference>
<dbReference type="VEuPathDB" id="AmoebaDB:DDB_G0278673"/>
<dbReference type="eggNOG" id="KOG3104">
    <property type="taxonomic scope" value="Eukaryota"/>
</dbReference>
<dbReference type="HOGENOM" id="CLU_037043_3_1_1"/>
<dbReference type="InParanoid" id="Q54Y76"/>
<dbReference type="OMA" id="DKVCRKT"/>
<dbReference type="PhylomeDB" id="Q54Y76"/>
<dbReference type="Reactome" id="R-DDI-8943724">
    <property type="pathway name" value="Regulation of PTEN gene transcription"/>
</dbReference>
<dbReference type="PRO" id="PR:Q54Y76"/>
<dbReference type="Proteomes" id="UP000002195">
    <property type="component" value="Chromosome 3"/>
</dbReference>
<dbReference type="GO" id="GO:0005737">
    <property type="term" value="C:cytoplasm"/>
    <property type="evidence" value="ECO:0000250"/>
    <property type="project" value="UniProtKB"/>
</dbReference>
<dbReference type="GO" id="GO:0005634">
    <property type="term" value="C:nucleus"/>
    <property type="evidence" value="ECO:0000250"/>
    <property type="project" value="UniProtKB"/>
</dbReference>
<dbReference type="GO" id="GO:0000994">
    <property type="term" value="F:RNA polymerase III core binding"/>
    <property type="evidence" value="ECO:0000318"/>
    <property type="project" value="GO_Central"/>
</dbReference>
<dbReference type="GO" id="GO:0016480">
    <property type="term" value="P:negative regulation of transcription by RNA polymerase III"/>
    <property type="evidence" value="ECO:0000250"/>
    <property type="project" value="UniProtKB"/>
</dbReference>
<dbReference type="FunFam" id="3.40.1000.50:FF:000003">
    <property type="entry name" value="Repressor of RNA polymerase III transcription MAF1"/>
    <property type="match status" value="1"/>
</dbReference>
<dbReference type="Gene3D" id="3.40.1000.50">
    <property type="entry name" value="Repressor of RNA polymerase III transcription Maf1"/>
    <property type="match status" value="1"/>
</dbReference>
<dbReference type="InterPro" id="IPR015257">
    <property type="entry name" value="Maf1"/>
</dbReference>
<dbReference type="InterPro" id="IPR038564">
    <property type="entry name" value="Maf1_sf"/>
</dbReference>
<dbReference type="PANTHER" id="PTHR22504">
    <property type="entry name" value="REPRESSOR OF RNA POLYMERASE III TRANSCRIPTION MAF1"/>
    <property type="match status" value="1"/>
</dbReference>
<dbReference type="PANTHER" id="PTHR22504:SF0">
    <property type="entry name" value="REPRESSOR OF RNA POLYMERASE III TRANSCRIPTION MAF1 HOMOLOG"/>
    <property type="match status" value="1"/>
</dbReference>
<dbReference type="Pfam" id="PF09174">
    <property type="entry name" value="Maf1"/>
    <property type="match status" value="1"/>
</dbReference>
<dbReference type="PIRSF" id="PIRSF037240">
    <property type="entry name" value="RNA_polIII_Trep_MAF1"/>
    <property type="match status" value="1"/>
</dbReference>
<name>MAF1_DICDI</name>
<sequence length="278" mass="31626">MKYIDSLQLIGLNSYLNSIDVGDALLMGELEAYSCKMAGSDKKIYRSLDKELEELSNTNSGAMNITNSNNNTNNNNNNNSNSGSSNNNNNNNNTLSVSMNSPSPTSNISVSPFGPMSNSTSRKTMIYLIQLLNLSFPDYDFTDSKPEQFQKEPSLNLVINSINANLAGYIKDYYLEFEAKLWSTLESEISLQKCEIYLYKPENGDPFTENGVLFSFNYFFYNKSLKKIIFFKCRYISKLQILNDDGSDVKDPLPDQEELDDYYREYYDGDTIDNMEMS</sequence>
<proteinExistence type="inferred from homology"/>
<gene>
    <name type="primary">maf1</name>
    <name type="ORF">DDB_G0278673</name>
</gene>